<geneLocation type="chloroplast"/>
<gene>
    <name evidence="1" type="primary">rpl20</name>
</gene>
<keyword id="KW-0150">Chloroplast</keyword>
<keyword id="KW-0934">Plastid</keyword>
<keyword id="KW-0687">Ribonucleoprotein</keyword>
<keyword id="KW-0689">Ribosomal protein</keyword>
<keyword id="KW-0694">RNA-binding</keyword>
<keyword id="KW-0699">rRNA-binding</keyword>
<proteinExistence type="inferred from homology"/>
<evidence type="ECO:0000255" key="1">
    <source>
        <dbReference type="HAMAP-Rule" id="MF_00382"/>
    </source>
</evidence>
<evidence type="ECO:0000305" key="2"/>
<name>RK20_THAPS</name>
<organism>
    <name type="scientific">Thalassiosira pseudonana</name>
    <name type="common">Marine diatom</name>
    <name type="synonym">Cyclotella nana</name>
    <dbReference type="NCBI Taxonomy" id="35128"/>
    <lineage>
        <taxon>Eukaryota</taxon>
        <taxon>Sar</taxon>
        <taxon>Stramenopiles</taxon>
        <taxon>Ochrophyta</taxon>
        <taxon>Bacillariophyta</taxon>
        <taxon>Coscinodiscophyceae</taxon>
        <taxon>Thalassiosirophycidae</taxon>
        <taxon>Thalassiosirales</taxon>
        <taxon>Thalassiosiraceae</taxon>
        <taxon>Thalassiosira</taxon>
    </lineage>
</organism>
<protein>
    <recommendedName>
        <fullName evidence="1">Large ribosomal subunit protein bL20c</fullName>
    </recommendedName>
    <alternativeName>
        <fullName evidence="2">50S ribosomal protein L20, chloroplastic</fullName>
    </alternativeName>
</protein>
<sequence length="117" mass="13690">MVRVKRGNVARKRRKKILQLAKGYRGAHSRLFRVANQQVMKALRYSYVGRKQKKRVFRKLWISRINASSREKGVTYSTLINSFKKSKINLNRKMLAQIAVLDCSTFYKLIDDAKSPN</sequence>
<reference key="1">
    <citation type="journal article" date="2007" name="Mol. Genet. Genomics">
        <title>Chloroplast genomes of the diatoms Phaeodactylum tricornutum and Thalassiosira pseudonana: comparison with other plastid genomes of the red lineage.</title>
        <authorList>
            <person name="Oudot-Le Secq M.-P."/>
            <person name="Grimwood J."/>
            <person name="Shapiro H."/>
            <person name="Armbrust E.V."/>
            <person name="Bowler C."/>
            <person name="Green B.R."/>
        </authorList>
    </citation>
    <scope>NUCLEOTIDE SEQUENCE [LARGE SCALE GENOMIC DNA]</scope>
    <source>
        <strain>CCMP1335 / NEPCC58 / CCAP 1085/12</strain>
    </source>
</reference>
<feature type="chain" id="PRO_0000276437" description="Large ribosomal subunit protein bL20c">
    <location>
        <begin position="1"/>
        <end position="117"/>
    </location>
</feature>
<comment type="function">
    <text evidence="1">Binds directly to 23S ribosomal RNA and is necessary for the in vitro assembly process of the 50S ribosomal subunit. It is not involved in the protein synthesizing functions of that subunit.</text>
</comment>
<comment type="subcellular location">
    <subcellularLocation>
        <location>Plastid</location>
        <location>Chloroplast</location>
    </subcellularLocation>
</comment>
<comment type="similarity">
    <text evidence="1">Belongs to the bacterial ribosomal protein bL20 family.</text>
</comment>
<dbReference type="EMBL" id="EF067921">
    <property type="protein sequence ID" value="ABK20737.1"/>
    <property type="molecule type" value="Genomic_DNA"/>
</dbReference>
<dbReference type="RefSeq" id="YP_874514.1">
    <property type="nucleotide sequence ID" value="NC_008589.1"/>
</dbReference>
<dbReference type="SMR" id="A0T0Q2"/>
<dbReference type="FunCoup" id="A0T0Q2">
    <property type="interactions" value="194"/>
</dbReference>
<dbReference type="STRING" id="35128.A0T0Q2"/>
<dbReference type="GeneID" id="4524855"/>
<dbReference type="InParanoid" id="A0T0Q2"/>
<dbReference type="GO" id="GO:0009507">
    <property type="term" value="C:chloroplast"/>
    <property type="evidence" value="ECO:0007669"/>
    <property type="project" value="UniProtKB-SubCell"/>
</dbReference>
<dbReference type="GO" id="GO:1990904">
    <property type="term" value="C:ribonucleoprotein complex"/>
    <property type="evidence" value="ECO:0007669"/>
    <property type="project" value="UniProtKB-KW"/>
</dbReference>
<dbReference type="GO" id="GO:0005840">
    <property type="term" value="C:ribosome"/>
    <property type="evidence" value="ECO:0007669"/>
    <property type="project" value="UniProtKB-KW"/>
</dbReference>
<dbReference type="GO" id="GO:0019843">
    <property type="term" value="F:rRNA binding"/>
    <property type="evidence" value="ECO:0007669"/>
    <property type="project" value="UniProtKB-UniRule"/>
</dbReference>
<dbReference type="GO" id="GO:0003735">
    <property type="term" value="F:structural constituent of ribosome"/>
    <property type="evidence" value="ECO:0000318"/>
    <property type="project" value="GO_Central"/>
</dbReference>
<dbReference type="GO" id="GO:0000027">
    <property type="term" value="P:ribosomal large subunit assembly"/>
    <property type="evidence" value="ECO:0007669"/>
    <property type="project" value="UniProtKB-UniRule"/>
</dbReference>
<dbReference type="GO" id="GO:0006412">
    <property type="term" value="P:translation"/>
    <property type="evidence" value="ECO:0007669"/>
    <property type="project" value="InterPro"/>
</dbReference>
<dbReference type="CDD" id="cd07026">
    <property type="entry name" value="Ribosomal_L20"/>
    <property type="match status" value="1"/>
</dbReference>
<dbReference type="FunFam" id="1.10.1900.20:FF:000001">
    <property type="entry name" value="50S ribosomal protein L20"/>
    <property type="match status" value="1"/>
</dbReference>
<dbReference type="Gene3D" id="6.10.160.10">
    <property type="match status" value="1"/>
</dbReference>
<dbReference type="Gene3D" id="1.10.1900.20">
    <property type="entry name" value="Ribosomal protein L20"/>
    <property type="match status" value="1"/>
</dbReference>
<dbReference type="HAMAP" id="MF_00382">
    <property type="entry name" value="Ribosomal_bL20"/>
    <property type="match status" value="1"/>
</dbReference>
<dbReference type="InterPro" id="IPR005813">
    <property type="entry name" value="Ribosomal_bL20"/>
</dbReference>
<dbReference type="InterPro" id="IPR049946">
    <property type="entry name" value="RIBOSOMAL_L20_CS"/>
</dbReference>
<dbReference type="InterPro" id="IPR035566">
    <property type="entry name" value="Ribosomal_protein_bL20_C"/>
</dbReference>
<dbReference type="NCBIfam" id="TIGR01032">
    <property type="entry name" value="rplT_bact"/>
    <property type="match status" value="1"/>
</dbReference>
<dbReference type="PANTHER" id="PTHR10986">
    <property type="entry name" value="39S RIBOSOMAL PROTEIN L20"/>
    <property type="match status" value="1"/>
</dbReference>
<dbReference type="Pfam" id="PF00453">
    <property type="entry name" value="Ribosomal_L20"/>
    <property type="match status" value="1"/>
</dbReference>
<dbReference type="PRINTS" id="PR00062">
    <property type="entry name" value="RIBOSOMALL20"/>
</dbReference>
<dbReference type="SUPFAM" id="SSF74731">
    <property type="entry name" value="Ribosomal protein L20"/>
    <property type="match status" value="1"/>
</dbReference>
<dbReference type="PROSITE" id="PS00937">
    <property type="entry name" value="RIBOSOMAL_L20"/>
    <property type="match status" value="1"/>
</dbReference>
<accession>A0T0Q2</accession>